<accession>P75835</accession>
<accession>Q9R7Q7</accession>
<name>YCAM_ECOLI</name>
<sequence length="476" mass="52496">MAGNVQEKQLRWYNIALMSFITVWGFGNVVNNYANQGLVVVFSWVFIFALYFTPYALIVGQLGSTFKDGKGGVSTWIKHTMGPGLAYLAAWTYWVVHIPYLAQKPQAILIALGWAMKGDGSLIKEYSVVALQGLTLVLFIFFMWVASRGMKSLKIVGSVAGIAMFVMSLLYVAMAVTAPAITEVHIATTNITWETFIPHIDFTYITTISMLVFAVGGAEKISPYVNQTRNPGKEFPKGMLCLAVMVAVCAILGSLAMGMMFDSRNIPDDLMTNGQYYAFQKLGEYYNMGNTLMVIYAIANTLGQVAALVFSIDAPLKVLLGDADSKYIPASLCRTNASGTPVNGYFLTLVLVAILIMLPTLGIGDMNNLYKWLLNLNSVVMPLRYLWVFVAFIAVVRLAQKYKPEYVFIRNKPLAMTVGIWCFAFTAFACLTGIFPKMEAFTAEWTFQLALNVATPFVLVGLGLIFPLLARKANSK</sequence>
<proteinExistence type="evidence at protein level"/>
<organism>
    <name type="scientific">Escherichia coli (strain K12)</name>
    <dbReference type="NCBI Taxonomy" id="83333"/>
    <lineage>
        <taxon>Bacteria</taxon>
        <taxon>Pseudomonadati</taxon>
        <taxon>Pseudomonadota</taxon>
        <taxon>Gammaproteobacteria</taxon>
        <taxon>Enterobacterales</taxon>
        <taxon>Enterobacteriaceae</taxon>
        <taxon>Escherichia</taxon>
    </lineage>
</organism>
<feature type="chain" id="PRO_0000213044" description="Inner membrane transporter YcaM">
    <location>
        <begin position="1"/>
        <end position="476"/>
    </location>
</feature>
<feature type="topological domain" description="Cytoplasmic" evidence="1">
    <location>
        <begin position="1"/>
        <end position="9"/>
    </location>
</feature>
<feature type="transmembrane region" description="Helical" evidence="1">
    <location>
        <begin position="10"/>
        <end position="30"/>
    </location>
</feature>
<feature type="topological domain" description="Periplasmic" evidence="1">
    <location>
        <begin position="31"/>
        <end position="38"/>
    </location>
</feature>
<feature type="transmembrane region" description="Helical" evidence="1">
    <location>
        <begin position="39"/>
        <end position="59"/>
    </location>
</feature>
<feature type="topological domain" description="Cytoplasmic" evidence="1">
    <location>
        <begin position="60"/>
        <end position="80"/>
    </location>
</feature>
<feature type="transmembrane region" description="Helical" evidence="1">
    <location>
        <begin position="81"/>
        <end position="101"/>
    </location>
</feature>
<feature type="topological domain" description="Periplasmic" evidence="1">
    <location>
        <begin position="102"/>
        <end position="125"/>
    </location>
</feature>
<feature type="transmembrane region" description="Helical" evidence="1">
    <location>
        <begin position="126"/>
        <end position="146"/>
    </location>
</feature>
<feature type="topological domain" description="Cytoplasmic" evidence="1">
    <location>
        <begin position="147"/>
        <end position="154"/>
    </location>
</feature>
<feature type="transmembrane region" description="Helical" evidence="1">
    <location>
        <begin position="155"/>
        <end position="175"/>
    </location>
</feature>
<feature type="topological domain" description="Periplasmic" evidence="1">
    <location>
        <begin position="176"/>
        <end position="195"/>
    </location>
</feature>
<feature type="transmembrane region" description="Helical" evidence="1">
    <location>
        <begin position="196"/>
        <end position="216"/>
    </location>
</feature>
<feature type="topological domain" description="Cytoplasmic" evidence="1">
    <location>
        <begin position="217"/>
        <end position="240"/>
    </location>
</feature>
<feature type="transmembrane region" description="Helical" evidence="1">
    <location>
        <begin position="241"/>
        <end position="261"/>
    </location>
</feature>
<feature type="topological domain" description="Periplasmic" evidence="1">
    <location>
        <begin position="262"/>
        <end position="291"/>
    </location>
</feature>
<feature type="transmembrane region" description="Helical" evidence="1">
    <location>
        <begin position="292"/>
        <end position="312"/>
    </location>
</feature>
<feature type="topological domain" description="Cytoplasmic" evidence="1">
    <location>
        <begin position="313"/>
        <end position="343"/>
    </location>
</feature>
<feature type="transmembrane region" description="Helical" evidence="1">
    <location>
        <begin position="344"/>
        <end position="364"/>
    </location>
</feature>
<feature type="topological domain" description="Periplasmic" evidence="1">
    <location>
        <begin position="365"/>
        <end position="375"/>
    </location>
</feature>
<feature type="transmembrane region" description="Helical" evidence="1">
    <location>
        <begin position="376"/>
        <end position="396"/>
    </location>
</feature>
<feature type="topological domain" description="Cytoplasmic" evidence="1">
    <location>
        <begin position="397"/>
        <end position="414"/>
    </location>
</feature>
<feature type="transmembrane region" description="Helical" evidence="1">
    <location>
        <begin position="415"/>
        <end position="435"/>
    </location>
</feature>
<feature type="topological domain" description="Periplasmic" evidence="1">
    <location>
        <begin position="436"/>
        <end position="448"/>
    </location>
</feature>
<feature type="transmembrane region" description="Helical" evidence="1">
    <location>
        <begin position="449"/>
        <end position="469"/>
    </location>
</feature>
<feature type="topological domain" description="Cytoplasmic" evidence="1">
    <location>
        <begin position="470"/>
        <end position="476"/>
    </location>
</feature>
<reference key="1">
    <citation type="journal article" date="1996" name="DNA Res.">
        <title>A 718-kb DNA sequence of the Escherichia coli K-12 genome corresponding to the 12.7-28.0 min region on the linkage map.</title>
        <authorList>
            <person name="Oshima T."/>
            <person name="Aiba H."/>
            <person name="Baba T."/>
            <person name="Fujita K."/>
            <person name="Hayashi K."/>
            <person name="Honjo A."/>
            <person name="Ikemoto K."/>
            <person name="Inada T."/>
            <person name="Itoh T."/>
            <person name="Kajihara M."/>
            <person name="Kanai K."/>
            <person name="Kashimoto K."/>
            <person name="Kimura S."/>
            <person name="Kitagawa M."/>
            <person name="Makino K."/>
            <person name="Masuda S."/>
            <person name="Miki T."/>
            <person name="Mizobuchi K."/>
            <person name="Mori H."/>
            <person name="Motomura K."/>
            <person name="Nakamura Y."/>
            <person name="Nashimoto H."/>
            <person name="Nishio Y."/>
            <person name="Saito N."/>
            <person name="Sampei G."/>
            <person name="Seki Y."/>
            <person name="Tagami H."/>
            <person name="Takemoto K."/>
            <person name="Wada C."/>
            <person name="Yamamoto Y."/>
            <person name="Yano M."/>
            <person name="Horiuchi T."/>
        </authorList>
    </citation>
    <scope>NUCLEOTIDE SEQUENCE [LARGE SCALE GENOMIC DNA]</scope>
    <source>
        <strain>K12 / W3110 / ATCC 27325 / DSM 5911</strain>
    </source>
</reference>
<reference key="2">
    <citation type="journal article" date="1997" name="Science">
        <title>The complete genome sequence of Escherichia coli K-12.</title>
        <authorList>
            <person name="Blattner F.R."/>
            <person name="Plunkett G. III"/>
            <person name="Bloch C.A."/>
            <person name="Perna N.T."/>
            <person name="Burland V."/>
            <person name="Riley M."/>
            <person name="Collado-Vides J."/>
            <person name="Glasner J.D."/>
            <person name="Rode C.K."/>
            <person name="Mayhew G.F."/>
            <person name="Gregor J."/>
            <person name="Davis N.W."/>
            <person name="Kirkpatrick H.A."/>
            <person name="Goeden M.A."/>
            <person name="Rose D.J."/>
            <person name="Mau B."/>
            <person name="Shao Y."/>
        </authorList>
    </citation>
    <scope>NUCLEOTIDE SEQUENCE [LARGE SCALE GENOMIC DNA]</scope>
    <source>
        <strain>K12 / MG1655 / ATCC 47076</strain>
    </source>
</reference>
<reference key="3">
    <citation type="journal article" date="2006" name="Mol. Syst. Biol.">
        <title>Highly accurate genome sequences of Escherichia coli K-12 strains MG1655 and W3110.</title>
        <authorList>
            <person name="Hayashi K."/>
            <person name="Morooka N."/>
            <person name="Yamamoto Y."/>
            <person name="Fujita K."/>
            <person name="Isono K."/>
            <person name="Choi S."/>
            <person name="Ohtsubo E."/>
            <person name="Baba T."/>
            <person name="Wanner B.L."/>
            <person name="Mori H."/>
            <person name="Horiuchi T."/>
        </authorList>
    </citation>
    <scope>NUCLEOTIDE SEQUENCE [LARGE SCALE GENOMIC DNA]</scope>
    <source>
        <strain>K12 / W3110 / ATCC 27325 / DSM 5911</strain>
    </source>
</reference>
<reference key="4">
    <citation type="journal article" date="2005" name="Science">
        <title>Global topology analysis of the Escherichia coli inner membrane proteome.</title>
        <authorList>
            <person name="Daley D.O."/>
            <person name="Rapp M."/>
            <person name="Granseth E."/>
            <person name="Melen K."/>
            <person name="Drew D."/>
            <person name="von Heijne G."/>
        </authorList>
    </citation>
    <scope>TOPOLOGY [LARGE SCALE ANALYSIS]</scope>
    <source>
        <strain>K12 / MG1655 / ATCC 47076</strain>
    </source>
</reference>
<evidence type="ECO:0000255" key="1"/>
<evidence type="ECO:0000305" key="2"/>
<gene>
    <name type="primary">ycaM</name>
    <name type="ordered locus">b0899</name>
    <name type="ordered locus">JW5119</name>
</gene>
<protein>
    <recommendedName>
        <fullName>Inner membrane transporter YcaM</fullName>
    </recommendedName>
</protein>
<dbReference type="EMBL" id="U00096">
    <property type="protein sequence ID" value="AAC73985.2"/>
    <property type="molecule type" value="Genomic_DNA"/>
</dbReference>
<dbReference type="EMBL" id="AP009048">
    <property type="protein sequence ID" value="BAA35634.2"/>
    <property type="molecule type" value="Genomic_DNA"/>
</dbReference>
<dbReference type="PIR" id="B64829">
    <property type="entry name" value="B64829"/>
</dbReference>
<dbReference type="RefSeq" id="NP_415419.2">
    <property type="nucleotide sequence ID" value="NC_000913.3"/>
</dbReference>
<dbReference type="RefSeq" id="WP_000918506.1">
    <property type="nucleotide sequence ID" value="NZ_SSZK01000002.1"/>
</dbReference>
<dbReference type="SMR" id="P75835"/>
<dbReference type="BioGRID" id="4261113">
    <property type="interactions" value="110"/>
</dbReference>
<dbReference type="DIP" id="DIP-11468N"/>
<dbReference type="FunCoup" id="P75835">
    <property type="interactions" value="8"/>
</dbReference>
<dbReference type="STRING" id="511145.b0899"/>
<dbReference type="TCDB" id="2.A.3.7.2">
    <property type="family name" value="the amino acid-polyamine-organocation (apc) family"/>
</dbReference>
<dbReference type="PaxDb" id="511145-b0899"/>
<dbReference type="EnsemblBacteria" id="AAC73985">
    <property type="protein sequence ID" value="AAC73985"/>
    <property type="gene ID" value="b0899"/>
</dbReference>
<dbReference type="GeneID" id="945518"/>
<dbReference type="KEGG" id="ecj:JW5119"/>
<dbReference type="KEGG" id="eco:b0899"/>
<dbReference type="KEGG" id="ecoc:C3026_05555"/>
<dbReference type="PATRIC" id="fig|1411691.4.peg.1377"/>
<dbReference type="EchoBASE" id="EB3461"/>
<dbReference type="eggNOG" id="COG0531">
    <property type="taxonomic scope" value="Bacteria"/>
</dbReference>
<dbReference type="HOGENOM" id="CLU_020854_0_1_6"/>
<dbReference type="InParanoid" id="P75835"/>
<dbReference type="OMA" id="IFGNTKW"/>
<dbReference type="OrthoDB" id="8766814at2"/>
<dbReference type="PhylomeDB" id="P75835"/>
<dbReference type="BioCyc" id="EcoCyc:YCAM"/>
<dbReference type="PRO" id="PR:P75835"/>
<dbReference type="Proteomes" id="UP000000625">
    <property type="component" value="Chromosome"/>
</dbReference>
<dbReference type="GO" id="GO:0005886">
    <property type="term" value="C:plasma membrane"/>
    <property type="evidence" value="ECO:0000314"/>
    <property type="project" value="EcoCyc"/>
</dbReference>
<dbReference type="GO" id="GO:0022857">
    <property type="term" value="F:transmembrane transporter activity"/>
    <property type="evidence" value="ECO:0007669"/>
    <property type="project" value="InterPro"/>
</dbReference>
<dbReference type="FunFam" id="1.20.1740.10:FF:000043">
    <property type="entry name" value="Inner membrane transporter YcaM"/>
    <property type="match status" value="1"/>
</dbReference>
<dbReference type="Gene3D" id="1.20.1740.10">
    <property type="entry name" value="Amino acid/polyamine transporter I"/>
    <property type="match status" value="1"/>
</dbReference>
<dbReference type="InterPro" id="IPR002293">
    <property type="entry name" value="AA/rel_permease1"/>
</dbReference>
<dbReference type="InterPro" id="IPR050367">
    <property type="entry name" value="APC_superfamily"/>
</dbReference>
<dbReference type="PANTHER" id="PTHR42770">
    <property type="entry name" value="AMINO ACID TRANSPORTER-RELATED"/>
    <property type="match status" value="1"/>
</dbReference>
<dbReference type="PANTHER" id="PTHR42770:SF15">
    <property type="entry name" value="GLUTAMATE_GAMMA-AMINOBUTYRATE ANTIPORTER-RELATED"/>
    <property type="match status" value="1"/>
</dbReference>
<dbReference type="Pfam" id="PF13520">
    <property type="entry name" value="AA_permease_2"/>
    <property type="match status" value="1"/>
</dbReference>
<dbReference type="PIRSF" id="PIRSF006060">
    <property type="entry name" value="AA_transporter"/>
    <property type="match status" value="1"/>
</dbReference>
<keyword id="KW-0997">Cell inner membrane</keyword>
<keyword id="KW-1003">Cell membrane</keyword>
<keyword id="KW-0472">Membrane</keyword>
<keyword id="KW-1185">Reference proteome</keyword>
<keyword id="KW-0812">Transmembrane</keyword>
<keyword id="KW-1133">Transmembrane helix</keyword>
<keyword id="KW-0813">Transport</keyword>
<comment type="subcellular location">
    <subcellularLocation>
        <location>Cell inner membrane</location>
        <topology>Multi-pass membrane protein</topology>
    </subcellularLocation>
</comment>
<comment type="similarity">
    <text evidence="2">Belongs to the amino acid-polyamine-organocation (APC) superfamily.</text>
</comment>